<dbReference type="EMBL" id="CP000738">
    <property type="protein sequence ID" value="ABR59861.1"/>
    <property type="molecule type" value="Genomic_DNA"/>
</dbReference>
<dbReference type="RefSeq" id="WP_011975187.1">
    <property type="nucleotide sequence ID" value="NC_009636.1"/>
</dbReference>
<dbReference type="RefSeq" id="YP_001326696.1">
    <property type="nucleotide sequence ID" value="NC_009636.1"/>
</dbReference>
<dbReference type="SMR" id="A6U881"/>
<dbReference type="STRING" id="366394.Smed_1008"/>
<dbReference type="GeneID" id="61614908"/>
<dbReference type="KEGG" id="smd:Smed_1008"/>
<dbReference type="PATRIC" id="fig|366394.8.peg.4129"/>
<dbReference type="eggNOG" id="COG0099">
    <property type="taxonomic scope" value="Bacteria"/>
</dbReference>
<dbReference type="HOGENOM" id="CLU_103849_1_2_5"/>
<dbReference type="OrthoDB" id="9803610at2"/>
<dbReference type="Proteomes" id="UP000001108">
    <property type="component" value="Chromosome"/>
</dbReference>
<dbReference type="GO" id="GO:0005829">
    <property type="term" value="C:cytosol"/>
    <property type="evidence" value="ECO:0007669"/>
    <property type="project" value="TreeGrafter"/>
</dbReference>
<dbReference type="GO" id="GO:0015935">
    <property type="term" value="C:small ribosomal subunit"/>
    <property type="evidence" value="ECO:0007669"/>
    <property type="project" value="TreeGrafter"/>
</dbReference>
<dbReference type="GO" id="GO:0019843">
    <property type="term" value="F:rRNA binding"/>
    <property type="evidence" value="ECO:0007669"/>
    <property type="project" value="UniProtKB-UniRule"/>
</dbReference>
<dbReference type="GO" id="GO:0003735">
    <property type="term" value="F:structural constituent of ribosome"/>
    <property type="evidence" value="ECO:0007669"/>
    <property type="project" value="InterPro"/>
</dbReference>
<dbReference type="GO" id="GO:0000049">
    <property type="term" value="F:tRNA binding"/>
    <property type="evidence" value="ECO:0007669"/>
    <property type="project" value="UniProtKB-UniRule"/>
</dbReference>
<dbReference type="GO" id="GO:0006412">
    <property type="term" value="P:translation"/>
    <property type="evidence" value="ECO:0007669"/>
    <property type="project" value="UniProtKB-UniRule"/>
</dbReference>
<dbReference type="FunFam" id="1.10.8.50:FF:000001">
    <property type="entry name" value="30S ribosomal protein S13"/>
    <property type="match status" value="1"/>
</dbReference>
<dbReference type="FunFam" id="4.10.910.10:FF:000001">
    <property type="entry name" value="30S ribosomal protein S13"/>
    <property type="match status" value="1"/>
</dbReference>
<dbReference type="Gene3D" id="1.10.8.50">
    <property type="match status" value="1"/>
</dbReference>
<dbReference type="Gene3D" id="4.10.910.10">
    <property type="entry name" value="30s ribosomal protein s13, domain 2"/>
    <property type="match status" value="1"/>
</dbReference>
<dbReference type="HAMAP" id="MF_01315">
    <property type="entry name" value="Ribosomal_uS13"/>
    <property type="match status" value="1"/>
</dbReference>
<dbReference type="InterPro" id="IPR027437">
    <property type="entry name" value="Rbsml_uS13_C"/>
</dbReference>
<dbReference type="InterPro" id="IPR001892">
    <property type="entry name" value="Ribosomal_uS13"/>
</dbReference>
<dbReference type="InterPro" id="IPR010979">
    <property type="entry name" value="Ribosomal_uS13-like_H2TH"/>
</dbReference>
<dbReference type="InterPro" id="IPR019980">
    <property type="entry name" value="Ribosomal_uS13_bac-type"/>
</dbReference>
<dbReference type="InterPro" id="IPR018269">
    <property type="entry name" value="Ribosomal_uS13_CS"/>
</dbReference>
<dbReference type="NCBIfam" id="TIGR03631">
    <property type="entry name" value="uS13_bact"/>
    <property type="match status" value="1"/>
</dbReference>
<dbReference type="PANTHER" id="PTHR10871">
    <property type="entry name" value="30S RIBOSOMAL PROTEIN S13/40S RIBOSOMAL PROTEIN S18"/>
    <property type="match status" value="1"/>
</dbReference>
<dbReference type="PANTHER" id="PTHR10871:SF1">
    <property type="entry name" value="SMALL RIBOSOMAL SUBUNIT PROTEIN US13M"/>
    <property type="match status" value="1"/>
</dbReference>
<dbReference type="Pfam" id="PF00416">
    <property type="entry name" value="Ribosomal_S13"/>
    <property type="match status" value="1"/>
</dbReference>
<dbReference type="PIRSF" id="PIRSF002134">
    <property type="entry name" value="Ribosomal_S13"/>
    <property type="match status" value="1"/>
</dbReference>
<dbReference type="SUPFAM" id="SSF46946">
    <property type="entry name" value="S13-like H2TH domain"/>
    <property type="match status" value="1"/>
</dbReference>
<dbReference type="PROSITE" id="PS00646">
    <property type="entry name" value="RIBOSOMAL_S13_1"/>
    <property type="match status" value="1"/>
</dbReference>
<dbReference type="PROSITE" id="PS50159">
    <property type="entry name" value="RIBOSOMAL_S13_2"/>
    <property type="match status" value="1"/>
</dbReference>
<keyword id="KW-0687">Ribonucleoprotein</keyword>
<keyword id="KW-0689">Ribosomal protein</keyword>
<keyword id="KW-0694">RNA-binding</keyword>
<keyword id="KW-0699">rRNA-binding</keyword>
<keyword id="KW-0820">tRNA-binding</keyword>
<accession>A6U881</accession>
<feature type="chain" id="PRO_1000051894" description="Small ribosomal subunit protein uS13">
    <location>
        <begin position="1"/>
        <end position="122"/>
    </location>
</feature>
<feature type="region of interest" description="Disordered" evidence="2">
    <location>
        <begin position="99"/>
        <end position="122"/>
    </location>
</feature>
<sequence length="122" mass="13808">MARIAGVNIPTAKRVVIALTYIHGIGTKFAQEIVEKVGIPAERRVHQLTDAEVLQIRETIDRDYQVEGDLRRETSMNIKRLMDLGCYRGLRHRRGLPVRGQRTHTNARTRKGPAKAIAGKKK</sequence>
<gene>
    <name evidence="1" type="primary">rpsM</name>
    <name type="ordered locus">Smed_1008</name>
</gene>
<comment type="function">
    <text evidence="1">Located at the top of the head of the 30S subunit, it contacts several helices of the 16S rRNA. In the 70S ribosome it contacts the 23S rRNA (bridge B1a) and protein L5 of the 50S subunit (bridge B1b), connecting the 2 subunits; these bridges are implicated in subunit movement. Contacts the tRNAs in the A and P-sites.</text>
</comment>
<comment type="subunit">
    <text evidence="1">Part of the 30S ribosomal subunit. Forms a loose heterodimer with protein S19. Forms two bridges to the 50S subunit in the 70S ribosome.</text>
</comment>
<comment type="similarity">
    <text evidence="1">Belongs to the universal ribosomal protein uS13 family.</text>
</comment>
<evidence type="ECO:0000255" key="1">
    <source>
        <dbReference type="HAMAP-Rule" id="MF_01315"/>
    </source>
</evidence>
<evidence type="ECO:0000256" key="2">
    <source>
        <dbReference type="SAM" id="MobiDB-lite"/>
    </source>
</evidence>
<evidence type="ECO:0000305" key="3"/>
<reference key="1">
    <citation type="submission" date="2007-06" db="EMBL/GenBank/DDBJ databases">
        <title>Complete sequence of Sinorhizobium medicae WSM419 chromosome.</title>
        <authorList>
            <consortium name="US DOE Joint Genome Institute"/>
            <person name="Copeland A."/>
            <person name="Lucas S."/>
            <person name="Lapidus A."/>
            <person name="Barry K."/>
            <person name="Glavina del Rio T."/>
            <person name="Dalin E."/>
            <person name="Tice H."/>
            <person name="Pitluck S."/>
            <person name="Chain P."/>
            <person name="Malfatti S."/>
            <person name="Shin M."/>
            <person name="Vergez L."/>
            <person name="Schmutz J."/>
            <person name="Larimer F."/>
            <person name="Land M."/>
            <person name="Hauser L."/>
            <person name="Kyrpides N."/>
            <person name="Mikhailova N."/>
            <person name="Reeve W.G."/>
            <person name="Richardson P."/>
        </authorList>
    </citation>
    <scope>NUCLEOTIDE SEQUENCE [LARGE SCALE GENOMIC DNA]</scope>
    <source>
        <strain>WSM419</strain>
    </source>
</reference>
<organism>
    <name type="scientific">Sinorhizobium medicae (strain WSM419)</name>
    <name type="common">Ensifer medicae</name>
    <dbReference type="NCBI Taxonomy" id="366394"/>
    <lineage>
        <taxon>Bacteria</taxon>
        <taxon>Pseudomonadati</taxon>
        <taxon>Pseudomonadota</taxon>
        <taxon>Alphaproteobacteria</taxon>
        <taxon>Hyphomicrobiales</taxon>
        <taxon>Rhizobiaceae</taxon>
        <taxon>Sinorhizobium/Ensifer group</taxon>
        <taxon>Sinorhizobium</taxon>
    </lineage>
</organism>
<name>RS13_SINMW</name>
<proteinExistence type="inferred from homology"/>
<protein>
    <recommendedName>
        <fullName evidence="1">Small ribosomal subunit protein uS13</fullName>
    </recommendedName>
    <alternativeName>
        <fullName evidence="3">30S ribosomal protein S13</fullName>
    </alternativeName>
</protein>